<keyword id="KW-1185">Reference proteome</keyword>
<organismHost>
    <name type="scientific">Pseudomonas savastanoi pv. phaseolicola</name>
    <name type="common">Pseudomonas syringae pv. phaseolicola</name>
    <dbReference type="NCBI Taxonomy" id="319"/>
</organismHost>
<evidence type="ECO:0000269" key="1">
    <source>
    </source>
</evidence>
<proteinExistence type="predicted"/>
<accession>Q38563</accession>
<protein>
    <recommendedName>
        <fullName>Protein P14</fullName>
    </recommendedName>
</protein>
<organism>
    <name type="scientific">Pseudomonas phage phi6</name>
    <name type="common">Bacteriophage phi-6</name>
    <dbReference type="NCBI Taxonomy" id="2928686"/>
    <lineage>
        <taxon>Viruses</taxon>
        <taxon>Riboviria</taxon>
        <taxon>Orthornavirae</taxon>
        <taxon>Duplornaviricota</taxon>
        <taxon>Vidaverviricetes</taxon>
        <taxon>Mindivirales</taxon>
        <taxon>Cystoviridae</taxon>
        <taxon>Cystovirus</taxon>
        <taxon>Cystovirus phi6</taxon>
    </lineage>
</organism>
<name>P14_BPPH6</name>
<comment type="function">
    <text evidence="1">Needed for optimal phage development.</text>
</comment>
<sequence>MATLQDVHLRVNDRVTPVYFTARSFLLVSPKRAGQATFLAREEGTDNPVVTCHVSDFYKDGV</sequence>
<dbReference type="EMBL" id="S72011">
    <property type="protein sequence ID" value="AAC60530.1"/>
    <property type="molecule type" value="Genomic_RNA"/>
</dbReference>
<dbReference type="EMBL" id="M17461">
    <property type="status" value="NOT_ANNOTATED_CDS"/>
    <property type="molecule type" value="Genomic_RNA"/>
</dbReference>
<dbReference type="Proteomes" id="UP000002610">
    <property type="component" value="Genome"/>
</dbReference>
<gene>
    <name type="primary">P14</name>
</gene>
<reference key="1">
    <citation type="journal article" date="1994" name="Virology">
        <title>A new small low-abundant nonstructural protein encoded by the L segment of the dsRNA bacteriophage phi 6.</title>
        <authorList>
            <person name="Casini G."/>
            <person name="Revel H.R."/>
        </authorList>
    </citation>
    <scope>NUCLEOTIDE SEQUENCE [GENOMIC RNA]</scope>
</reference>
<reference key="2">
    <citation type="journal article" date="1988" name="J. Virol.">
        <title>Nucleotide sequence of the large double-stranded RNA segment of bacteriophage phi 6: genes specifying the viral replicase and transcriptase.</title>
        <authorList>
            <person name="Mindich L."/>
            <person name="Nemhauser I."/>
            <person name="Gottlieb P."/>
            <person name="Romantschuk M."/>
            <person name="Carton J."/>
            <person name="Frucht S."/>
            <person name="Strassman J."/>
            <person name="Bamford D.H."/>
            <person name="Kalkkinen N."/>
        </authorList>
    </citation>
    <scope>NUCLEOTIDE SEQUENCE [GENOMIC RNA]</scope>
</reference>
<reference key="3">
    <citation type="journal article" date="1996" name="Virology">
        <title>Construction and analysis of a bacteriophage phi 6 gene 14 nonsense mutant.</title>
        <authorList>
            <person name="Casini G."/>
            <person name="Revel H.R."/>
        </authorList>
    </citation>
    <scope>FUNCTION</scope>
</reference>
<feature type="chain" id="PRO_0000391749" description="Protein P14">
    <location>
        <begin position="1"/>
        <end position="62"/>
    </location>
</feature>